<keyword id="KW-0012">Acyltransferase</keyword>
<keyword id="KW-0472">Membrane</keyword>
<keyword id="KW-0808">Transferase</keyword>
<keyword id="KW-0812">Transmembrane</keyword>
<keyword id="KW-1133">Transmembrane helix</keyword>
<protein>
    <recommendedName>
        <fullName evidence="4">Acyltransferase clz18</fullName>
        <shortName evidence="4">AT clz18</shortName>
        <ecNumber evidence="6">2.3.1.-</ecNumber>
    </recommendedName>
    <alternativeName>
        <fullName evidence="4">Squalestatin S1 biosynthesis cluster protein clz18</fullName>
    </alternativeName>
    <alternativeName>
        <fullName evidence="4">Zaragozic acid A biosynthesis cluster protein 18</fullName>
    </alternativeName>
</protein>
<sequence>MIHKPIPNSKPLTAYIDGLRGLLSIIIFNAHLTPVIILGYDKVSRSQVSTSPRNVLDIPLVASCVNNWVLFTIPILKLVYSASPAVCLFFAISGYVMSLKWVRYMNHRSQTSEINSARIFTDFGSSIFRRTLRLSLLAMASMIVPFALMKTGFFDRTVVQQHGLTKLERGMRFWLEQWEQFPARHESWWEQTCDLVQNCARIFTVFMQRRDEAFSPRYNPVLWTIKADLRASLALTVTHLALLGTKRSSRLQILAALAVLGVAVGSLECPLFWAGWIIAEIHHAAEQTPLAQGKGTGQPRQKTNTAGMDTFGKTVVLALGCYVASYPTWKPEKAPMFNTFHMMTPGLIVPPRTWHSLGAVLVLYSLRDVPLARRICESSVAQFLGTHSFAIYLIHFCLVISFGPDLFSWVWSRTGHENLQSLAVGFGITYSILFMAVLLTAAIFRRFIESPVNKCVDSLYRSASVRKEA</sequence>
<evidence type="ECO:0000250" key="1">
    <source>
        <dbReference type="UniProtKB" id="A0A3G1DJH6"/>
    </source>
</evidence>
<evidence type="ECO:0000255" key="2"/>
<evidence type="ECO:0000269" key="3">
    <source>
    </source>
</evidence>
<evidence type="ECO:0000303" key="4">
    <source>
    </source>
</evidence>
<evidence type="ECO:0000305" key="5"/>
<evidence type="ECO:0000305" key="6">
    <source>
    </source>
</evidence>
<gene>
    <name evidence="4" type="primary">clz18</name>
</gene>
<comment type="function">
    <text evidence="1 3 6">Acyltransferase; part of the gene cluster that mediates the biosynthesis of squalestatin S1 (SQS1, also known as zaragozic acid A), a heavily oxidized fungal polyketide that offers potent cholesterol lowering activity by targeting squalene synthase (SS) (PubMed:28605916). SQS1 is composed of a 2,8-dioxobicyclic[3.2.1]octane-3,4,5-tricarboxyclic acid core that is connected to two lipophilic polyketide arms (PubMed:28605916). These initial steps feature the priming of an unusual benzoic acid starter unit onto the highly reducing polyketide synthase clz14, followed by oxaloacetate extension and product release to generate a tricarboxylic acid containing product (PubMed:28605916). The phenylalanine ammonia lyase (PAL) clz10 and the acyl-CoA ligase clz12 are involved in transforming phenylalanine into benzoyl-CoA (PubMed:28605916). The citrate synthase-like protein clz17 is involved in connecting the C-alpha-carbons of the hexaketide chain and oxaloacetate to afford the tricarboxylic acid unit (PubMed:28605916). The potential hydrolytic enzymes, clz11 and clz13, are in close proximity to pks2 and may participate in product release (PubMed:28605916). On the other side, the tetraketide arm is synthesized by a the squalestatin tetraketide synthase clz2 and enzymatically esterified to the core in the last biosynthetic step, by the acetyltransferase clz6 (By similarity). The biosynthesis of the tetraketide must involve 3 rounds of chain extension (By similarity). After the first and second rounds methyl-transfer occurs, and in all rounds of extension the ketoreductase and dehydratase are active (By similarity). The enoyl reductase and C-MeT of clz2 are not active in the final round of extension (By similarity). The acetyltransferase clz6 appears to have a broad substrate selectivity for its acyl CoA substrate, allowing the in vitro synthesis of novel squalestatins (By similarity). The biosynthesis of SQS1 requires several oxidative steps likely performed by oxidoreductases clz3, clz15 and clz16 (Probable). Finally, in support of the identification of the cluster as being responsible for SQS1 production, the cluster contains a gene encoding a putative squalene synthase (SS) clz20, suggesting a likely mechanism for self-resistance (Probable).</text>
</comment>
<comment type="pathway">
    <text evidence="6">Secondary metabolite biosynthesis.</text>
</comment>
<comment type="subcellular location">
    <subcellularLocation>
        <location evidence="2">Membrane</location>
        <topology evidence="2">Multi-pass membrane protein</topology>
    </subcellularLocation>
</comment>
<comment type="similarity">
    <text evidence="5">Belongs to the acyltransferase 3 family.</text>
</comment>
<name>CLZ18_COCLU</name>
<dbReference type="EC" id="2.3.1.-" evidence="6"/>
<dbReference type="EMBL" id="MF806533">
    <property type="protein sequence ID" value="AXF50661.1"/>
    <property type="molecule type" value="Genomic_DNA"/>
</dbReference>
<dbReference type="GO" id="GO:0016020">
    <property type="term" value="C:membrane"/>
    <property type="evidence" value="ECO:0007669"/>
    <property type="project" value="UniProtKB-SubCell"/>
</dbReference>
<dbReference type="GO" id="GO:0016747">
    <property type="term" value="F:acyltransferase activity, transferring groups other than amino-acyl groups"/>
    <property type="evidence" value="ECO:0007669"/>
    <property type="project" value="InterPro"/>
</dbReference>
<dbReference type="InterPro" id="IPR002656">
    <property type="entry name" value="Acyl_transf_3_dom"/>
</dbReference>
<dbReference type="InterPro" id="IPR050879">
    <property type="entry name" value="Acyltransferase_3"/>
</dbReference>
<dbReference type="PANTHER" id="PTHR23028">
    <property type="entry name" value="ACETYLTRANSFERASE"/>
    <property type="match status" value="1"/>
</dbReference>
<dbReference type="PANTHER" id="PTHR23028:SF134">
    <property type="entry name" value="PUTATIVE (AFU_ORTHOLOGUE AFUA_4G08520)-RELATED"/>
    <property type="match status" value="1"/>
</dbReference>
<dbReference type="Pfam" id="PF01757">
    <property type="entry name" value="Acyl_transf_3"/>
    <property type="match status" value="1"/>
</dbReference>
<accession>A0A345BJP8</accession>
<reference key="1">
    <citation type="journal article" date="2017" name="Org. Lett.">
        <title>Identification and heterologous production of a benzoyl-primed tricarboxylic acid polyketide intermediate from the zaragozic acid A biosynthetic pathway.</title>
        <authorList>
            <person name="Liu N."/>
            <person name="Hung Y.S."/>
            <person name="Gao S.S."/>
            <person name="Hang L."/>
            <person name="Zou Y."/>
            <person name="Chooi Y.H."/>
            <person name="Tang Y."/>
        </authorList>
    </citation>
    <scope>NUCLEOTIDE SEQUENCE [GENOMIC DNA]</scope>
    <scope>FUNCTION</scope>
    <scope>PATHWAY</scope>
    <source>
        <strain>ATCC 74067</strain>
    </source>
</reference>
<feature type="chain" id="PRO_0000452639" description="Acyltransferase clz18">
    <location>
        <begin position="1"/>
        <end position="469"/>
    </location>
</feature>
<feature type="transmembrane region" description="Helical" evidence="2">
    <location>
        <begin position="21"/>
        <end position="41"/>
    </location>
</feature>
<feature type="transmembrane region" description="Helical" evidence="2">
    <location>
        <begin position="70"/>
        <end position="90"/>
    </location>
</feature>
<feature type="transmembrane region" description="Helical" evidence="2">
    <location>
        <begin position="134"/>
        <end position="154"/>
    </location>
</feature>
<feature type="transmembrane region" description="Helical" evidence="2">
    <location>
        <begin position="253"/>
        <end position="273"/>
    </location>
</feature>
<feature type="transmembrane region" description="Helical" evidence="2">
    <location>
        <begin position="346"/>
        <end position="366"/>
    </location>
</feature>
<feature type="transmembrane region" description="Helical" evidence="2">
    <location>
        <begin position="391"/>
        <end position="411"/>
    </location>
</feature>
<feature type="transmembrane region" description="Helical" evidence="2">
    <location>
        <begin position="424"/>
        <end position="444"/>
    </location>
</feature>
<organism>
    <name type="scientific">Cochliobolus lunatus</name>
    <name type="common">Filamentous fungus</name>
    <name type="synonym">Curvularia lunata</name>
    <dbReference type="NCBI Taxonomy" id="5503"/>
    <lineage>
        <taxon>Eukaryota</taxon>
        <taxon>Fungi</taxon>
        <taxon>Dikarya</taxon>
        <taxon>Ascomycota</taxon>
        <taxon>Pezizomycotina</taxon>
        <taxon>Dothideomycetes</taxon>
        <taxon>Pleosporomycetidae</taxon>
        <taxon>Pleosporales</taxon>
        <taxon>Pleosporineae</taxon>
        <taxon>Pleosporaceae</taxon>
        <taxon>Curvularia</taxon>
    </lineage>
</organism>
<proteinExistence type="inferred from homology"/>